<dbReference type="EMBL" id="DQ221252">
    <property type="protein sequence ID" value="ABB29444.1"/>
    <property type="molecule type" value="Genomic_DNA"/>
</dbReference>
<dbReference type="SMR" id="Q2XVR4"/>
<dbReference type="FunCoup" id="Q2XVR4">
    <property type="interactions" value="74"/>
</dbReference>
<dbReference type="STRING" id="99883.ENSTNIP00000001759"/>
<dbReference type="GlyCosmos" id="Q2XVR4">
    <property type="glycosylation" value="6 sites, No reported glycans"/>
</dbReference>
<dbReference type="InParanoid" id="Q2XVR4"/>
<dbReference type="Proteomes" id="UP000007303">
    <property type="component" value="Unassembled WGS sequence"/>
</dbReference>
<dbReference type="GO" id="GO:0001518">
    <property type="term" value="C:voltage-gated sodium channel complex"/>
    <property type="evidence" value="ECO:0007669"/>
    <property type="project" value="InterPro"/>
</dbReference>
<dbReference type="GO" id="GO:0005248">
    <property type="term" value="F:voltage-gated sodium channel activity"/>
    <property type="evidence" value="ECO:0007669"/>
    <property type="project" value="InterPro"/>
</dbReference>
<dbReference type="GO" id="GO:0086010">
    <property type="term" value="P:membrane depolarization during action potential"/>
    <property type="evidence" value="ECO:0007669"/>
    <property type="project" value="TreeGrafter"/>
</dbReference>
<dbReference type="GO" id="GO:0019228">
    <property type="term" value="P:neuronal action potential"/>
    <property type="evidence" value="ECO:0007669"/>
    <property type="project" value="TreeGrafter"/>
</dbReference>
<dbReference type="CDD" id="cd13433">
    <property type="entry name" value="Na_channel_gate"/>
    <property type="match status" value="1"/>
</dbReference>
<dbReference type="FunFam" id="1.10.238.10:FF:000002">
    <property type="entry name" value="Sodium channel protein"/>
    <property type="match status" value="1"/>
</dbReference>
<dbReference type="FunFam" id="1.10.287.70:FF:000001">
    <property type="entry name" value="Sodium channel protein"/>
    <property type="match status" value="1"/>
</dbReference>
<dbReference type="FunFam" id="1.10.287.70:FF:000006">
    <property type="entry name" value="Sodium channel protein"/>
    <property type="match status" value="1"/>
</dbReference>
<dbReference type="FunFam" id="1.20.120.350:FF:000002">
    <property type="entry name" value="Sodium channel protein"/>
    <property type="match status" value="1"/>
</dbReference>
<dbReference type="FunFam" id="1.20.120.350:FF:000004">
    <property type="entry name" value="Sodium channel protein"/>
    <property type="match status" value="1"/>
</dbReference>
<dbReference type="FunFam" id="1.20.120.350:FF:000005">
    <property type="entry name" value="Sodium channel protein"/>
    <property type="match status" value="1"/>
</dbReference>
<dbReference type="FunFam" id="1.20.5.1190:FF:000001">
    <property type="entry name" value="Sodium channel protein"/>
    <property type="match status" value="1"/>
</dbReference>
<dbReference type="FunFam" id="1.20.120.350:FF:000003">
    <property type="entry name" value="Voltage-dependent sodium channel"/>
    <property type="match status" value="1"/>
</dbReference>
<dbReference type="Gene3D" id="1.10.287.70">
    <property type="match status" value="4"/>
</dbReference>
<dbReference type="Gene3D" id="1.10.238.10">
    <property type="entry name" value="EF-hand"/>
    <property type="match status" value="1"/>
</dbReference>
<dbReference type="Gene3D" id="1.20.5.1190">
    <property type="entry name" value="iswi atpase"/>
    <property type="match status" value="1"/>
</dbReference>
<dbReference type="Gene3D" id="1.20.120.350">
    <property type="entry name" value="Voltage-gated potassium channels. Chain C"/>
    <property type="match status" value="4"/>
</dbReference>
<dbReference type="InterPro" id="IPR005821">
    <property type="entry name" value="Ion_trans_dom"/>
</dbReference>
<dbReference type="InterPro" id="IPR001696">
    <property type="entry name" value="Na_channel_asu"/>
</dbReference>
<dbReference type="InterPro" id="IPR044564">
    <property type="entry name" value="Na_chnl_inactivation_gate"/>
</dbReference>
<dbReference type="InterPro" id="IPR010526">
    <property type="entry name" value="Na_trans_assoc_dom"/>
</dbReference>
<dbReference type="InterPro" id="IPR043203">
    <property type="entry name" value="VGCC_Ca_Na"/>
</dbReference>
<dbReference type="InterPro" id="IPR027359">
    <property type="entry name" value="Volt_channel_dom_sf"/>
</dbReference>
<dbReference type="PANTHER" id="PTHR10037:SF223">
    <property type="entry name" value="SODIUM CHANNEL PROTEIN TYPE 4 SUBUNIT ALPHA"/>
    <property type="match status" value="1"/>
</dbReference>
<dbReference type="PANTHER" id="PTHR10037">
    <property type="entry name" value="VOLTAGE-GATED CATION CHANNEL CALCIUM AND SODIUM"/>
    <property type="match status" value="1"/>
</dbReference>
<dbReference type="Pfam" id="PF00520">
    <property type="entry name" value="Ion_trans"/>
    <property type="match status" value="4"/>
</dbReference>
<dbReference type="Pfam" id="PF24609">
    <property type="entry name" value="IQ_SCN5A_C"/>
    <property type="match status" value="1"/>
</dbReference>
<dbReference type="Pfam" id="PF06512">
    <property type="entry name" value="Na_trans_assoc"/>
    <property type="match status" value="1"/>
</dbReference>
<dbReference type="PRINTS" id="PR00170">
    <property type="entry name" value="NACHANNEL"/>
</dbReference>
<dbReference type="SUPFAM" id="SSF81324">
    <property type="entry name" value="Voltage-gated potassium channels"/>
    <property type="match status" value="4"/>
</dbReference>
<gene>
    <name type="primary">scn4ab</name>
    <name type="synonym">nav1.4b</name>
</gene>
<comment type="function">
    <text evidence="2">Pore-forming subunit of a voltage-gated sodium (Nav) channel that directly mediates the depolarizing phase of action potentials in excitable membranes. Navs, also called VGSCs (voltage-gated sodium channels) or VDSCs (voltage-dependent sodium channels), operate by switching between closed and open conformations depending on the voltage difference across the membrane. In the open conformation they allow Na(+) ions to selectively pass through the pore, along their electrochemical gradient. The influx of Na+ ions provokes membrane depolarization, initiating the propagation of electrical signals throughout cells and tissues.</text>
</comment>
<comment type="catalytic activity">
    <reaction evidence="2">
        <text>Na(+)(in) = Na(+)(out)</text>
        <dbReference type="Rhea" id="RHEA:34963"/>
        <dbReference type="ChEBI" id="CHEBI:29101"/>
    </reaction>
</comment>
<comment type="subunit">
    <text evidence="2">Voltage-gated sodium (Nav) channels consist of an ion-conducting alpha subunit which is functional on its own associated with regulatory beta subunits.</text>
</comment>
<comment type="subcellular location">
    <subcellularLocation>
        <location evidence="1">Cell membrane</location>
        <topology evidence="2">Multi-pass membrane protein</topology>
    </subcellularLocation>
</comment>
<comment type="domain">
    <text evidence="2">The sequence contains 4 internal repeats, each with 5 hydrophobic segments (S1, S2, S3, S5, S6) and one positively charged segment (S4). Segments S4 are probably the voltage-sensors and are characterized by a series of positively charged amino acids at every third position.</text>
</comment>
<comment type="similarity">
    <text evidence="5">Belongs to the sodium channel (TC 1.A.1.10) family. Nav1.4/SCN4A subfamily.</text>
</comment>
<feature type="chain" id="PRO_0000371322" description="Sodium channel protein type 4 subunit alpha B">
    <location>
        <begin position="1"/>
        <end position="1715"/>
    </location>
</feature>
<feature type="topological domain" description="Cytoplasmic" evidence="5">
    <location>
        <begin position="1"/>
        <end position="126"/>
    </location>
</feature>
<feature type="transmembrane region" description="Helical; Name=S1 of repeat I" evidence="2">
    <location>
        <begin position="127"/>
        <end position="145"/>
    </location>
</feature>
<feature type="topological domain" description="Extracellular" evidence="5">
    <location>
        <begin position="146"/>
        <end position="152"/>
    </location>
</feature>
<feature type="transmembrane region" description="Helical; Name=S2 of repeat I" evidence="2">
    <location>
        <begin position="153"/>
        <end position="173"/>
    </location>
</feature>
<feature type="topological domain" description="Cytoplasmic" evidence="5">
    <location>
        <begin position="174"/>
        <end position="187"/>
    </location>
</feature>
<feature type="transmembrane region" description="Helical; Name=S3 of repeat I" evidence="2">
    <location>
        <begin position="188"/>
        <end position="205"/>
    </location>
</feature>
<feature type="topological domain" description="Extracellular" evidence="5">
    <location>
        <begin position="206"/>
        <end position="211"/>
    </location>
</feature>
<feature type="transmembrane region" description="Helical; Name=S4 of repeat I" evidence="2">
    <location>
        <begin position="212"/>
        <end position="228"/>
    </location>
</feature>
<feature type="topological domain" description="Cytoplasmic" evidence="5">
    <location>
        <begin position="229"/>
        <end position="247"/>
    </location>
</feature>
<feature type="transmembrane region" description="Helical; Name=S5 of repeat I" evidence="2">
    <location>
        <begin position="248"/>
        <end position="267"/>
    </location>
</feature>
<feature type="topological domain" description="Extracellular" evidence="5">
    <location>
        <begin position="268"/>
        <end position="368"/>
    </location>
</feature>
<feature type="intramembrane region" description="Pore-forming" evidence="2">
    <location>
        <begin position="369"/>
        <end position="393"/>
    </location>
</feature>
<feature type="topological domain" description="Extracellular" evidence="5">
    <location>
        <begin position="394"/>
        <end position="400"/>
    </location>
</feature>
<feature type="transmembrane region" description="Helical; Name=S6 of repeat I" evidence="2">
    <location>
        <begin position="401"/>
        <end position="421"/>
    </location>
</feature>
<feature type="topological domain" description="Cytoplasmic" evidence="5">
    <location>
        <begin position="422"/>
        <end position="515"/>
    </location>
</feature>
<feature type="transmembrane region" description="Helical; Name=S1 of repeat II" evidence="2">
    <location>
        <begin position="516"/>
        <end position="534"/>
    </location>
</feature>
<feature type="topological domain" description="Extracellular" evidence="5">
    <location>
        <begin position="535"/>
        <end position="545"/>
    </location>
</feature>
<feature type="transmembrane region" description="Helical; Name=S2 of repeat II" evidence="2">
    <location>
        <begin position="546"/>
        <end position="565"/>
    </location>
</feature>
<feature type="topological domain" description="Cytoplasmic" evidence="5">
    <location>
        <begin position="566"/>
        <end position="579"/>
    </location>
</feature>
<feature type="transmembrane region" description="Helical; Name=S3 of repeat II" evidence="2">
    <location>
        <begin position="580"/>
        <end position="599"/>
    </location>
</feature>
<feature type="topological domain" description="Extracellular" evidence="5">
    <location>
        <begin position="600"/>
        <end position="601"/>
    </location>
</feature>
<feature type="transmembrane region" description="Helical; Name=S4 of repeat II" evidence="2">
    <location>
        <begin position="602"/>
        <end position="619"/>
    </location>
</feature>
<feature type="topological domain" description="Cytoplasmic" evidence="5">
    <location>
        <begin position="620"/>
        <end position="635"/>
    </location>
</feature>
<feature type="transmembrane region" description="Helical; Name=S5 of repeat II" evidence="2">
    <location>
        <begin position="636"/>
        <end position="654"/>
    </location>
</feature>
<feature type="topological domain" description="Extracellular" evidence="5">
    <location>
        <begin position="655"/>
        <end position="683"/>
    </location>
</feature>
<feature type="intramembrane region" description="Pore-forming" evidence="2">
    <location>
        <begin position="684"/>
        <end position="704"/>
    </location>
</feature>
<feature type="topological domain" description="Extracellular" evidence="5">
    <location>
        <begin position="705"/>
        <end position="715"/>
    </location>
</feature>
<feature type="transmembrane region" description="Helical; Name=S6 of repeat II" evidence="2">
    <location>
        <begin position="716"/>
        <end position="734"/>
    </location>
</feature>
<feature type="topological domain" description="Cytoplasmic" evidence="5">
    <location>
        <begin position="735"/>
        <end position="915"/>
    </location>
</feature>
<feature type="transmembrane region" description="Helical; Name=S1 of repeat III" evidence="2">
    <location>
        <begin position="916"/>
        <end position="933"/>
    </location>
</feature>
<feature type="topological domain" description="Extracellular" evidence="5">
    <location>
        <begin position="934"/>
        <end position="946"/>
    </location>
</feature>
<feature type="transmembrane region" description="Helical; Name=S2 of repeat III" evidence="2">
    <location>
        <begin position="947"/>
        <end position="965"/>
    </location>
</feature>
<feature type="topological domain" description="Cytoplasmic" evidence="5">
    <location>
        <begin position="966"/>
        <end position="979"/>
    </location>
</feature>
<feature type="transmembrane region" description="Helical; Name=S3 of repeat III" evidence="2">
    <location>
        <begin position="980"/>
        <end position="998"/>
    </location>
</feature>
<feature type="topological domain" description="Extracellular" evidence="5">
    <location>
        <begin position="999"/>
        <end position="1006"/>
    </location>
</feature>
<feature type="transmembrane region" description="Helical; Name=S4 of repeat III" evidence="2">
    <location>
        <begin position="1007"/>
        <end position="1025"/>
    </location>
</feature>
<feature type="topological domain" description="Cytoplasmic" evidence="5">
    <location>
        <begin position="1026"/>
        <end position="1042"/>
    </location>
</feature>
<feature type="transmembrane region" description="Helical; Name=S5 of repeat III" evidence="2">
    <location>
        <begin position="1043"/>
        <end position="1062"/>
    </location>
</feature>
<feature type="topological domain" description="Extracellular" evidence="5">
    <location>
        <begin position="1063"/>
        <end position="1115"/>
    </location>
</feature>
<feature type="intramembrane region" description="Pore-forming" evidence="2">
    <location>
        <begin position="1116"/>
        <end position="1137"/>
    </location>
</feature>
<feature type="topological domain" description="Extracellular" evidence="5">
    <location>
        <begin position="1138"/>
        <end position="1154"/>
    </location>
</feature>
<feature type="transmembrane region" description="Helical; Name=S6 of repeat III" evidence="2">
    <location>
        <begin position="1155"/>
        <end position="1176"/>
    </location>
</feature>
<feature type="topological domain" description="Cytoplasmic" evidence="5">
    <location>
        <begin position="1177"/>
        <end position="1239"/>
    </location>
</feature>
<feature type="transmembrane region" description="Helical; Name=S1 of repeat IV" evidence="2">
    <location>
        <begin position="1240"/>
        <end position="1257"/>
    </location>
</feature>
<feature type="topological domain" description="Extracellular" evidence="5">
    <location>
        <begin position="1258"/>
        <end position="1268"/>
    </location>
</feature>
<feature type="transmembrane region" description="Helical; Name=S2 of repeat IV" evidence="2">
    <location>
        <begin position="1269"/>
        <end position="1287"/>
    </location>
</feature>
<feature type="topological domain" description="Cytoplasmic" evidence="5">
    <location>
        <begin position="1288"/>
        <end position="1299"/>
    </location>
</feature>
<feature type="transmembrane region" description="Helical; Name=S3 of repeat IV" evidence="2">
    <location>
        <begin position="1300"/>
        <end position="1317"/>
    </location>
</feature>
<feature type="topological domain" description="Extracellular" evidence="5">
    <location>
        <begin position="1318"/>
        <end position="1330"/>
    </location>
</feature>
<feature type="transmembrane region" description="Helical; Name=S4 of repeat IV" evidence="2">
    <location>
        <begin position="1331"/>
        <end position="1347"/>
    </location>
</feature>
<feature type="topological domain" description="Cytoplasmic" evidence="5">
    <location>
        <begin position="1348"/>
        <end position="1366"/>
    </location>
</feature>
<feature type="transmembrane region" description="Helical; Name=S5 of repeat IV" evidence="2">
    <location>
        <begin position="1367"/>
        <end position="1384"/>
    </location>
</feature>
<feature type="topological domain" description="Extracellular" evidence="5">
    <location>
        <begin position="1385"/>
        <end position="1406"/>
    </location>
</feature>
<feature type="intramembrane region" description="Pore-forming" evidence="2">
    <location>
        <begin position="1407"/>
        <end position="1429"/>
    </location>
</feature>
<feature type="topological domain" description="Extracellular" evidence="5">
    <location>
        <begin position="1430"/>
        <end position="1458"/>
    </location>
</feature>
<feature type="transmembrane region" description="Helical; Name=S6 of repeat IV" evidence="2">
    <location>
        <begin position="1459"/>
        <end position="1481"/>
    </location>
</feature>
<feature type="topological domain" description="Cytoplasmic" evidence="5">
    <location>
        <begin position="1482"/>
        <end position="1715"/>
    </location>
</feature>
<feature type="repeat" description="I" evidence="5">
    <location>
        <begin position="108"/>
        <end position="431"/>
    </location>
</feature>
<feature type="repeat" description="II" evidence="5">
    <location>
        <begin position="497"/>
        <end position="768"/>
    </location>
</feature>
<feature type="repeat" description="III" evidence="5">
    <location>
        <begin position="896"/>
        <end position="1211"/>
    </location>
</feature>
<feature type="repeat" description="IV" evidence="5">
    <location>
        <begin position="1220"/>
        <end position="1517"/>
    </location>
</feature>
<feature type="domain" description="IQ">
    <location>
        <begin position="1611"/>
        <end position="1640"/>
    </location>
</feature>
<feature type="region of interest" description="Disordered" evidence="4">
    <location>
        <begin position="824"/>
        <end position="865"/>
    </location>
</feature>
<feature type="region of interest" description="Important for rapid channel inactivation" evidence="1">
    <location>
        <begin position="1195"/>
        <end position="1197"/>
    </location>
</feature>
<feature type="compositionally biased region" description="Acidic residues" evidence="4">
    <location>
        <begin position="825"/>
        <end position="838"/>
    </location>
</feature>
<feature type="glycosylation site" description="N-linked (GlcNAc...) asparagine" evidence="3">
    <location>
        <position position="209"/>
    </location>
</feature>
<feature type="glycosylation site" description="N-linked (GlcNAc...) asparagine" evidence="3">
    <location>
        <position position="284"/>
    </location>
</feature>
<feature type="glycosylation site" description="N-linked (GlcNAc...) asparagine" evidence="3">
    <location>
        <position position="304"/>
    </location>
</feature>
<feature type="glycosylation site" description="N-linked (GlcNAc...) asparagine" evidence="3">
    <location>
        <position position="339"/>
    </location>
</feature>
<feature type="glycosylation site" description="N-linked (GlcNAc...) asparagine" evidence="3">
    <location>
        <position position="1074"/>
    </location>
</feature>
<feature type="glycosylation site" description="N-linked (GlcNAc...) asparagine" evidence="3">
    <location>
        <position position="1088"/>
    </location>
</feature>
<feature type="disulfide bond" evidence="2">
    <location>
        <begin position="275"/>
        <end position="337"/>
    </location>
</feature>
<feature type="disulfide bond" evidence="2">
    <location>
        <begin position="346"/>
        <end position="352"/>
    </location>
</feature>
<feature type="disulfide bond" evidence="2">
    <location>
        <begin position="668"/>
        <end position="674"/>
    </location>
</feature>
<feature type="disulfide bond" evidence="2">
    <location>
        <begin position="706"/>
        <end position="715"/>
    </location>
</feature>
<feature type="disulfide bond" evidence="2">
    <location>
        <begin position="1072"/>
        <end position="1092"/>
    </location>
</feature>
<feature type="disulfide bond" evidence="2">
    <location>
        <begin position="1437"/>
        <end position="1452"/>
    </location>
</feature>
<protein>
    <recommendedName>
        <fullName>Sodium channel protein type 4 subunit alpha B</fullName>
    </recommendedName>
    <alternativeName>
        <fullName>Voltage-gated sodium channel subunit alpha Nav1.4b</fullName>
    </alternativeName>
</protein>
<accession>Q2XVR4</accession>
<name>SC4AB_TETNG</name>
<organism>
    <name type="scientific">Tetraodon nigroviridis</name>
    <name type="common">Spotted green pufferfish</name>
    <name type="synonym">Chelonodon nigroviridis</name>
    <dbReference type="NCBI Taxonomy" id="99883"/>
    <lineage>
        <taxon>Eukaryota</taxon>
        <taxon>Metazoa</taxon>
        <taxon>Chordata</taxon>
        <taxon>Craniata</taxon>
        <taxon>Vertebrata</taxon>
        <taxon>Euteleostomi</taxon>
        <taxon>Actinopterygii</taxon>
        <taxon>Neopterygii</taxon>
        <taxon>Teleostei</taxon>
        <taxon>Neoteleostei</taxon>
        <taxon>Acanthomorphata</taxon>
        <taxon>Eupercaria</taxon>
        <taxon>Tetraodontiformes</taxon>
        <taxon>Tetradontoidea</taxon>
        <taxon>Tetraodontidae</taxon>
        <taxon>Tetraodon</taxon>
    </lineage>
</organism>
<keyword id="KW-1003">Cell membrane</keyword>
<keyword id="KW-1015">Disulfide bond</keyword>
<keyword id="KW-0325">Glycoprotein</keyword>
<keyword id="KW-0407">Ion channel</keyword>
<keyword id="KW-0406">Ion transport</keyword>
<keyword id="KW-0472">Membrane</keyword>
<keyword id="KW-1185">Reference proteome</keyword>
<keyword id="KW-0677">Repeat</keyword>
<keyword id="KW-0915">Sodium</keyword>
<keyword id="KW-0894">Sodium channel</keyword>
<keyword id="KW-0739">Sodium transport</keyword>
<keyword id="KW-0812">Transmembrane</keyword>
<keyword id="KW-1133">Transmembrane helix</keyword>
<keyword id="KW-0813">Transport</keyword>
<keyword id="KW-0851">Voltage-gated channel</keyword>
<reference key="1">
    <citation type="journal article" date="2005" name="Curr. Biol.">
        <title>Genetic basis of tetrodotoxin resistance in pufferfishes.</title>
        <authorList>
            <person name="Venkatesh B."/>
            <person name="Lu S.Q."/>
            <person name="Dandona N."/>
            <person name="See S.L."/>
            <person name="Brenner S."/>
            <person name="Soong T.W."/>
        </authorList>
    </citation>
    <scope>NUCLEOTIDE SEQUENCE [GENOMIC DNA]</scope>
</reference>
<sequence>MGTLLPPVGSEVFRRFTPSSLNEIQQRQQIKEERKRANAEVSEELFSEPASDLEAGKPLPFIYGEPPHELLNVPLEDMDPFYQSQKTFIVLSKGNVIHRFNAESSLYLLSPFNSMRIFAIKILVHSLFSLFIMATILTNCVFMTLSDPPAWSKTVEYVFTFIYTFEATIKVVSRGFCVGQFTFLKDPWNWLDFMVISMAYLTELVDLGNVSVLRTFRVLRALKTITVIPGLKTIVGALIQSVKKLADAMVLTVFCLSVFALIGLQLFMGNLRQKCVLIPPVVSNLTFEVTNSSHGYFGNDTRGNDTENKDLMFEFEEHINNPDNYYYLAGQRDPLLCGNSSDAGVCPESYICLKVGRNPNYGYTSYDSFGWAFLALFRLMTQDFWENLFQLTLRAAGKTYMIFFVVVIFLGSFYLINLILAVVAMAYAEQNQATMAEAKQKEEEYLHILEALKKREEEQAAWKEALKVQEPHNFEDDHKLCPPCWYAFANVFLKWDCCSCWRHLKRCLSAIVMDPFVDLGITICIILNTIFMAMEHYPMSADFEELLSVGNLVFTGIFTCEMVLKILAMDPYFYFQVGWNIFDSIIVTMSLVELGLANVQGLSVLRSFRLMRVFKLAKSWPTLNMLIKIIGNSVGALGNLTLVLAIIVFIFAVVGMQLFGKNYKDCVCRISEDCKLPRWHMNDFFHAFLIIFRVLCGEWIDTMWDCMEVSGQTMCLIVYMMVLVIGNLVVLNLFLALLLSSFSGDNLAAQDDEGENNLQIAVNRIKRAVAWAKTWILLHLCILTESNHNQHDAVSDEEENRITKNILALTSVTSDQFFKVPIAEAESDSEDSDDDDVDEDKHSRCDESSFCSTVQDPEVKENEADEDNVSKMPMDCWSENCYSRCPSLDIDTSQGKGKVWCNIRRACFIIVENNYFESFIVFMILLSSGALAFEDIYLEKHQLIKTILEYADKVFTYVFVVEMVLKWFAYGFKSYFSNAWCWLDFLIVDVSLVSLTANILGYSELGAIKSLRTLRALRPLRALSRFEGMRVVVNALVGAVPSIFNVLLVCLIFWLIFSIMGVNLFAGKFSYCFNETSQEQFDKKIVNNKTECIALIEANFTEVRWKNLKVNYDNVGIGYLSLLQVATFKGWMEIMYAAVDSRDVESQPIYEVNIYMYLYFVIFIIFGSFFTLNLFIGVIIDNFNQQKAKLGGQDIFMTEEQKKYYNAMKKLGSKKPQKPVPRPENALQGLVFDLVTKQIFDVFIMVLICLNMVTMMVETDEQTKEKEDILYWINVIFIVIFTTECILKTIALRRHYFSIGWNVFDFVVVILSILGLLLADIIEKYFVSPTLFRVIRLARIGRVLRLIRGAKGIRTLLFALMMSLPALFNIGLLLFLIMFIFSIFGMSNFAYVKKEAMIDDMFNFETFGNSMICLFMITTSAGWDGLLSPIMNKPPDCDPDLENPGTTVRGNCGSPAIGIVFFSTYIIMSFLVVVNMYIAIILENFNVATEESSDPLCEDDFDMFYETWEKFDPDATQFIQYSKLSDFCDTLKEPLRIPKPNTIKLISLDLPLVPGDKIHCMDILLALTAEVLGDSDEMDTLKATMEEKFMANNPSKVSYEPISSTLRRKEEEVAARVIQRAYRKYLLQRTVRLASFTYREKTEGWGTKKAPETEGLLCKQFNQLFGNKRETEEPLMSKNDELGQVELQSEVLLHAAPPLNTLELLLGTSERESLV</sequence>
<proteinExistence type="inferred from homology"/>
<evidence type="ECO:0000250" key="1">
    <source>
        <dbReference type="UniProtKB" id="P15390"/>
    </source>
</evidence>
<evidence type="ECO:0000250" key="2">
    <source>
        <dbReference type="UniProtKB" id="P35499"/>
    </source>
</evidence>
<evidence type="ECO:0000255" key="3"/>
<evidence type="ECO:0000256" key="4">
    <source>
        <dbReference type="SAM" id="MobiDB-lite"/>
    </source>
</evidence>
<evidence type="ECO:0000305" key="5"/>